<sequence length="796" mass="92376">MSRRRHSDGDDGGQSHKRRRTSEPVEIEDRLESLICRVGEKSTSSLESNLEGLAGVLEADLPNYKNKILRILCAVARLLPEKLTVYTTLVGLLNARNYNFGGEFVEAMIRQLKETLKANLYTDALYLVRFLCDLVNCHVIAAPSMVAMFENFVSVTQEEDVPQVRSDWFVYAVLSSLPWVGKELDEKKDVEMDRLLNQIDGYLKRRLKTHVPMLQVWTAEKPHPQEEYLDCLYAQIQKLKKDRWQERHILRPYIAFDSVLCEALQHNLPPFTPPAHMPDCQYPMPRVIFRMFDYTDAPEGPVMPGSHSVERFVIEDNLHNIIKSHWKERKTCAAQLLSYPGKNKIPLNYHIVEVIFGELFQLPCPPHIDVMYTTLLIELCKLQPGSLPQVLAQATEMMYVRLDTMNTICIDRLLNWFSHHLSNFQFRWSWDDWVDCLALDADKPKPKFVKEVLEKCMRLSYHQRIVDIVPPTFSGLIPADPIFFYKYQDEANSALPGYAVAIAVGNAIKNRASNEEILTVLKDVPNPNQEDDDDEGEGFNPLKIEVFLQTLLHLAAKSFSHSFSALAKFHEILKALTDCDEGKLHILRVVYEVWKNHPQMVSVLVDKLIRTQIVDCAAVANWLFSPSMAHEFTRFYVWEILHSTIRKMNKHVQKIQKELEEAKDKLERQQHKKQKDSGDEEDMEKNSEDEDGQLEEQIERLQEKVESAQSEQKNLFLVIFQRFIMMLTEHLVRCETGSVDFSTPWYKNCIERLQQIFLMHHVTIQQYMGTLENLLFTAELDHHILAVYQQFCALQL</sequence>
<evidence type="ECO:0000250" key="1">
    <source>
        <dbReference type="UniProtKB" id="Q09161"/>
    </source>
</evidence>
<evidence type="ECO:0000255" key="2"/>
<evidence type="ECO:0000256" key="3">
    <source>
        <dbReference type="SAM" id="MobiDB-lite"/>
    </source>
</evidence>
<evidence type="ECO:0000305" key="4"/>
<accession>C0H906</accession>
<comment type="function">
    <text evidence="1">Component of the cap-binding complex (CBC), which binds cotranscriptionally to the 5'-cap of pre-mRNAs and is involved in various processes such as pre-mRNA splicing, translation regulation, nonsense-mediated mRNA decay, RNA-mediated gene silencing (RNAi) by microRNAs (miRNAs) and mRNA export. The CBC complex is involved in mRNA export from the nucleus, leading to the recruitment of the mRNA export machinery to the 5'-end of mRNA and to mRNA export in a 5' to 3' direction through the nuclear pore. The CBC complex is also involved in mediating U snRNA and intronless mRNAs export from the nucleus. The CBC complex is essential for a pioneer round of mRNA translation, before steady state translation when the CBC complex is replaced by cytoplasmic cap-binding protein eIF4E. The pioneer round of mRNA translation mediated by the CBC complex plays a central role in nonsense-mediated mRNA decay (NMD), NMD only taking place in mRNAs bound to the CBC complex, but not on eIF4E-bound mRNAs. The CBC complex enhances NMD in mRNAs containing at least one exon-junction complex (EJC), promoting the interaction between UPF1 and UPF2. The CBC complex is also involved in 'failsafe' NMD, which is independent of the EJC complex, while it does not participate in Staufen-mediated mRNA decay (SMD). During cell proliferation, the CBC complex is also involved in microRNAs (miRNAs) biogenesis via its interaction with SRRT/ARS2 and is required for miRNA-mediated RNA interference. The CBC complex also acts as a negative regulator of parn, thereby acting as an inhibitor of mRNA deadenylation. In the CBC complex, ncbp1/cbp80 does not bind directly capped RNAs (m7GpppG-capped RNA) but is required to stabilize the movement of the N-terminal loop of ncbp2/cbp20 and lock the CBC into a high affinity cap-binding state with the cap structure. Associates with NCBP3 to form an alternative cap-binding complex (CBC) which plays a key role in mRNA export. The conventional CBC with NCBP2 binds both small nuclear RNA (snRNA) and messenger (mRNA) and is involved in their export from the nucleus whereas the alternative CBC with NCBP3 does not bind snRNA and associates only with mRNA thereby playing a role only in mRNA export (By similarity).</text>
</comment>
<comment type="subunit">
    <text evidence="1">Component of the nuclear cap-binding complex (CBC), a heterodimer composed of ncbp1/cbp80 and ncbp2/cbp20 that interacts with m7GpppG-capped RNA. Component of an alternative nuclear cap-binding complex (CBC) composed of ncbp1/cbp80 and ncbp3 (By similarity).</text>
</comment>
<comment type="subcellular location">
    <subcellularLocation>
        <location evidence="1">Nucleus</location>
    </subcellularLocation>
    <subcellularLocation>
        <location evidence="1">Cytoplasm</location>
    </subcellularLocation>
</comment>
<comment type="similarity">
    <text evidence="4">Belongs to the NCBP1 family.</text>
</comment>
<name>NCBP1_SALSA</name>
<proteinExistence type="evidence at transcript level"/>
<gene>
    <name type="primary">ncbp1</name>
    <name type="synonym">cbp80</name>
</gene>
<feature type="chain" id="PRO_0000385229" description="Nuclear cap-binding protein subunit 1">
    <location>
        <begin position="1"/>
        <end position="796"/>
    </location>
</feature>
<feature type="domain" description="MIF4G">
    <location>
        <begin position="28"/>
        <end position="240"/>
    </location>
</feature>
<feature type="region of interest" description="Disordered" evidence="3">
    <location>
        <begin position="1"/>
        <end position="26"/>
    </location>
</feature>
<feature type="region of interest" description="Disordered" evidence="3">
    <location>
        <begin position="664"/>
        <end position="695"/>
    </location>
</feature>
<feature type="coiled-coil region" evidence="2">
    <location>
        <begin position="641"/>
        <end position="719"/>
    </location>
</feature>
<feature type="compositionally biased region" description="Acidic residues" evidence="3">
    <location>
        <begin position="678"/>
        <end position="695"/>
    </location>
</feature>
<keyword id="KW-0175">Coiled coil</keyword>
<keyword id="KW-0963">Cytoplasm</keyword>
<keyword id="KW-0506">mRNA capping</keyword>
<keyword id="KW-0507">mRNA processing</keyword>
<keyword id="KW-0508">mRNA splicing</keyword>
<keyword id="KW-0509">mRNA transport</keyword>
<keyword id="KW-0866">Nonsense-mediated mRNA decay</keyword>
<keyword id="KW-0539">Nucleus</keyword>
<keyword id="KW-1185">Reference proteome</keyword>
<keyword id="KW-0943">RNA-mediated gene silencing</keyword>
<keyword id="KW-0810">Translation regulation</keyword>
<keyword id="KW-0813">Transport</keyword>
<organism>
    <name type="scientific">Salmo salar</name>
    <name type="common">Atlantic salmon</name>
    <dbReference type="NCBI Taxonomy" id="8030"/>
    <lineage>
        <taxon>Eukaryota</taxon>
        <taxon>Metazoa</taxon>
        <taxon>Chordata</taxon>
        <taxon>Craniata</taxon>
        <taxon>Vertebrata</taxon>
        <taxon>Euteleostomi</taxon>
        <taxon>Actinopterygii</taxon>
        <taxon>Neopterygii</taxon>
        <taxon>Teleostei</taxon>
        <taxon>Protacanthopterygii</taxon>
        <taxon>Salmoniformes</taxon>
        <taxon>Salmonidae</taxon>
        <taxon>Salmoninae</taxon>
        <taxon>Salmo</taxon>
    </lineage>
</organism>
<dbReference type="EMBL" id="BT058812">
    <property type="protein sequence ID" value="ACN10525.1"/>
    <property type="molecule type" value="mRNA"/>
</dbReference>
<dbReference type="RefSeq" id="NP_001158814.1">
    <property type="nucleotide sequence ID" value="NM_001165342.1"/>
</dbReference>
<dbReference type="SMR" id="C0H906"/>
<dbReference type="STRING" id="8030.ENSSSAP00000016077"/>
<dbReference type="PaxDb" id="8030-ENSSSAP00000016077"/>
<dbReference type="Ensembl" id="ENSSSAT00075023420">
    <property type="protein sequence ID" value="ENSSSAP00075015851"/>
    <property type="gene ID" value="ENSSSAG00075011409"/>
</dbReference>
<dbReference type="GeneID" id="100306803"/>
<dbReference type="KEGG" id="sasa:100306803"/>
<dbReference type="CTD" id="100306803"/>
<dbReference type="OrthoDB" id="187772at7898"/>
<dbReference type="Proteomes" id="UP000087266">
    <property type="component" value="Chromosome ssa05"/>
</dbReference>
<dbReference type="Bgee" id="ENSSSAG00000007681">
    <property type="expression patterns" value="Expressed in muscle tissue and 24 other cell types or tissues"/>
</dbReference>
<dbReference type="GO" id="GO:0005737">
    <property type="term" value="C:cytoplasm"/>
    <property type="evidence" value="ECO:0007669"/>
    <property type="project" value="UniProtKB-SubCell"/>
</dbReference>
<dbReference type="GO" id="GO:0005846">
    <property type="term" value="C:nuclear cap binding complex"/>
    <property type="evidence" value="ECO:0007669"/>
    <property type="project" value="InterPro"/>
</dbReference>
<dbReference type="GO" id="GO:0005634">
    <property type="term" value="C:nucleus"/>
    <property type="evidence" value="ECO:0007669"/>
    <property type="project" value="UniProtKB-SubCell"/>
</dbReference>
<dbReference type="GO" id="GO:0003729">
    <property type="term" value="F:mRNA binding"/>
    <property type="evidence" value="ECO:0007669"/>
    <property type="project" value="TreeGrafter"/>
</dbReference>
<dbReference type="GO" id="GO:0000339">
    <property type="term" value="F:RNA cap binding"/>
    <property type="evidence" value="ECO:0007669"/>
    <property type="project" value="InterPro"/>
</dbReference>
<dbReference type="GO" id="GO:0006370">
    <property type="term" value="P:7-methylguanosine mRNA capping"/>
    <property type="evidence" value="ECO:0007669"/>
    <property type="project" value="UniProtKB-KW"/>
</dbReference>
<dbReference type="GO" id="GO:0006406">
    <property type="term" value="P:mRNA export from nucleus"/>
    <property type="evidence" value="ECO:0000250"/>
    <property type="project" value="UniProtKB"/>
</dbReference>
<dbReference type="GO" id="GO:0000184">
    <property type="term" value="P:nuclear-transcribed mRNA catabolic process, nonsense-mediated decay"/>
    <property type="evidence" value="ECO:0007669"/>
    <property type="project" value="UniProtKB-KW"/>
</dbReference>
<dbReference type="GO" id="GO:0050684">
    <property type="term" value="P:regulation of mRNA processing"/>
    <property type="evidence" value="ECO:0007669"/>
    <property type="project" value="TreeGrafter"/>
</dbReference>
<dbReference type="GO" id="GO:0006417">
    <property type="term" value="P:regulation of translation"/>
    <property type="evidence" value="ECO:0007669"/>
    <property type="project" value="UniProtKB-KW"/>
</dbReference>
<dbReference type="GO" id="GO:0031047">
    <property type="term" value="P:regulatory ncRNA-mediated gene silencing"/>
    <property type="evidence" value="ECO:0007669"/>
    <property type="project" value="UniProtKB-KW"/>
</dbReference>
<dbReference type="GO" id="GO:0008380">
    <property type="term" value="P:RNA splicing"/>
    <property type="evidence" value="ECO:0007669"/>
    <property type="project" value="UniProtKB-KW"/>
</dbReference>
<dbReference type="FunFam" id="1.25.40.180:FF:000021">
    <property type="entry name" value="Nuclear cap binding protein subunit 1"/>
    <property type="match status" value="1"/>
</dbReference>
<dbReference type="FunFam" id="1.25.40.180:FF:000010">
    <property type="entry name" value="Nuclear cap-binding protein subunit 1"/>
    <property type="match status" value="1"/>
</dbReference>
<dbReference type="Gene3D" id="1.25.40.180">
    <property type="match status" value="3"/>
</dbReference>
<dbReference type="InterPro" id="IPR016024">
    <property type="entry name" value="ARM-type_fold"/>
</dbReference>
<dbReference type="InterPro" id="IPR027159">
    <property type="entry name" value="CBP80"/>
</dbReference>
<dbReference type="InterPro" id="IPR015172">
    <property type="entry name" value="MIF4G-like_typ-1"/>
</dbReference>
<dbReference type="InterPro" id="IPR015174">
    <property type="entry name" value="MIF4G-like_typ-2"/>
</dbReference>
<dbReference type="InterPro" id="IPR003890">
    <property type="entry name" value="MIF4G-like_typ-3"/>
</dbReference>
<dbReference type="PANTHER" id="PTHR12412">
    <property type="entry name" value="CAP BINDING PROTEIN"/>
    <property type="match status" value="1"/>
</dbReference>
<dbReference type="PANTHER" id="PTHR12412:SF2">
    <property type="entry name" value="NUCLEAR CAP-BINDING PROTEIN SUBUNIT 1"/>
    <property type="match status" value="1"/>
</dbReference>
<dbReference type="Pfam" id="PF02854">
    <property type="entry name" value="MIF4G"/>
    <property type="match status" value="1"/>
</dbReference>
<dbReference type="Pfam" id="PF09088">
    <property type="entry name" value="MIF4G_like"/>
    <property type="match status" value="1"/>
</dbReference>
<dbReference type="Pfam" id="PF09090">
    <property type="entry name" value="MIF4G_like_2"/>
    <property type="match status" value="1"/>
</dbReference>
<dbReference type="SMART" id="SM00543">
    <property type="entry name" value="MIF4G"/>
    <property type="match status" value="1"/>
</dbReference>
<dbReference type="SUPFAM" id="SSF48371">
    <property type="entry name" value="ARM repeat"/>
    <property type="match status" value="3"/>
</dbReference>
<reference key="1">
    <citation type="journal article" date="2010" name="BMC Genomics">
        <title>Salmo salar and Esox lucius full-length cDNA sequences reveal changes in evolutionary pressures on a post-tetraploidization genome.</title>
        <authorList>
            <person name="Leong J.S."/>
            <person name="Jantzen S.G."/>
            <person name="von Schalburg K.R."/>
            <person name="Cooper G.A."/>
            <person name="Messmer A.M."/>
            <person name="Liao N.Y."/>
            <person name="Munro S."/>
            <person name="Moore R."/>
            <person name="Holt R.A."/>
            <person name="Jones S.J."/>
            <person name="Davidson W.S."/>
            <person name="Koop B.F."/>
        </authorList>
    </citation>
    <scope>NUCLEOTIDE SEQUENCE [LARGE SCALE MRNA]</scope>
    <source>
        <tissue>Brain</tissue>
    </source>
</reference>
<protein>
    <recommendedName>
        <fullName>Nuclear cap-binding protein subunit 1</fullName>
    </recommendedName>
    <alternativeName>
        <fullName>80 kDa nuclear cap-binding protein</fullName>
        <shortName>CBP80</shortName>
        <shortName>NCBP 80 kDa subunit</shortName>
    </alternativeName>
</protein>